<accession>P47311</accession>
<accession>Q49281</accession>
<feature type="chain" id="PRO_0000093239" description="Putative ABC transporter ATP-binding protein MG065">
    <location>
        <begin position="1"/>
        <end position="466"/>
    </location>
</feature>
<feature type="domain" description="ABC transporter" evidence="1">
    <location>
        <begin position="233"/>
        <end position="463"/>
    </location>
</feature>
<feature type="binding site" evidence="1">
    <location>
        <begin position="269"/>
        <end position="276"/>
    </location>
    <ligand>
        <name>ATP</name>
        <dbReference type="ChEBI" id="CHEBI:30616"/>
    </ligand>
</feature>
<feature type="sequence conflict" description="In Ref. 2; AAD12436." evidence="2" ref="2">
    <original>GDEPTG</original>
    <variation>WWWTYW</variation>
    <location>
        <begin position="394"/>
        <end position="399"/>
    </location>
</feature>
<proteinExistence type="inferred from homology"/>
<name>Y065_MYCGE</name>
<reference key="1">
    <citation type="journal article" date="1995" name="Science">
        <title>The minimal gene complement of Mycoplasma genitalium.</title>
        <authorList>
            <person name="Fraser C.M."/>
            <person name="Gocayne J.D."/>
            <person name="White O."/>
            <person name="Adams M.D."/>
            <person name="Clayton R.A."/>
            <person name="Fleischmann R.D."/>
            <person name="Bult C.J."/>
            <person name="Kerlavage A.R."/>
            <person name="Sutton G.G."/>
            <person name="Kelley J.M."/>
            <person name="Fritchman J.L."/>
            <person name="Weidman J.F."/>
            <person name="Small K.V."/>
            <person name="Sandusky M."/>
            <person name="Fuhrmann J.L."/>
            <person name="Nguyen D.T."/>
            <person name="Utterback T.R."/>
            <person name="Saudek D.M."/>
            <person name="Phillips C.A."/>
            <person name="Merrick J.M."/>
            <person name="Tomb J.-F."/>
            <person name="Dougherty B.A."/>
            <person name="Bott K.F."/>
            <person name="Hu P.-C."/>
            <person name="Lucier T.S."/>
            <person name="Peterson S.N."/>
            <person name="Smith H.O."/>
            <person name="Hutchison C.A. III"/>
            <person name="Venter J.C."/>
        </authorList>
    </citation>
    <scope>NUCLEOTIDE SEQUENCE [LARGE SCALE GENOMIC DNA]</scope>
    <source>
        <strain>ATCC 33530 / DSM 19775 / NCTC 10195 / G37</strain>
    </source>
</reference>
<reference key="2">
    <citation type="journal article" date="1993" name="J. Bacteriol.">
        <title>A survey of the Mycoplasma genitalium genome by using random sequencing.</title>
        <authorList>
            <person name="Peterson S.N."/>
            <person name="Hu P.-C."/>
            <person name="Bott K.F."/>
            <person name="Hutchison C.A. III"/>
        </authorList>
    </citation>
    <scope>NUCLEOTIDE SEQUENCE [GENOMIC DNA] OF 393-466</scope>
    <source>
        <strain>ATCC 33530 / DSM 19775 / NCTC 10195 / G37</strain>
    </source>
</reference>
<dbReference type="EMBL" id="L43967">
    <property type="protein sequence ID" value="AAC71283.1"/>
    <property type="molecule type" value="Genomic_DNA"/>
</dbReference>
<dbReference type="EMBL" id="U02154">
    <property type="protein sequence ID" value="AAD12436.1"/>
    <property type="molecule type" value="Genomic_DNA"/>
</dbReference>
<dbReference type="PIR" id="B64207">
    <property type="entry name" value="B64207"/>
</dbReference>
<dbReference type="RefSeq" id="WP_010869315.1">
    <property type="nucleotide sequence ID" value="NC_000908.2"/>
</dbReference>
<dbReference type="SMR" id="P47311"/>
<dbReference type="FunCoup" id="P47311">
    <property type="interactions" value="198"/>
</dbReference>
<dbReference type="STRING" id="243273.MG_065"/>
<dbReference type="GeneID" id="88282184"/>
<dbReference type="KEGG" id="mge:MG_065"/>
<dbReference type="eggNOG" id="COG1136">
    <property type="taxonomic scope" value="Bacteria"/>
</dbReference>
<dbReference type="HOGENOM" id="CLU_046843_0_0_14"/>
<dbReference type="InParanoid" id="P47311"/>
<dbReference type="OrthoDB" id="9802264at2"/>
<dbReference type="BioCyc" id="MGEN243273:G1GJ2-70-MONOMER"/>
<dbReference type="Proteomes" id="UP000000807">
    <property type="component" value="Chromosome"/>
</dbReference>
<dbReference type="GO" id="GO:0005524">
    <property type="term" value="F:ATP binding"/>
    <property type="evidence" value="ECO:0007669"/>
    <property type="project" value="UniProtKB-KW"/>
</dbReference>
<dbReference type="GO" id="GO:0016887">
    <property type="term" value="F:ATP hydrolysis activity"/>
    <property type="evidence" value="ECO:0007669"/>
    <property type="project" value="InterPro"/>
</dbReference>
<dbReference type="CDD" id="cd03255">
    <property type="entry name" value="ABC_MJ0796_LolCDE_FtsE"/>
    <property type="match status" value="1"/>
</dbReference>
<dbReference type="Gene3D" id="3.40.50.300">
    <property type="entry name" value="P-loop containing nucleotide triphosphate hydrolases"/>
    <property type="match status" value="1"/>
</dbReference>
<dbReference type="InterPro" id="IPR003593">
    <property type="entry name" value="AAA+_ATPase"/>
</dbReference>
<dbReference type="InterPro" id="IPR003439">
    <property type="entry name" value="ABC_transporter-like_ATP-bd"/>
</dbReference>
<dbReference type="InterPro" id="IPR017871">
    <property type="entry name" value="ABC_transporter-like_CS"/>
</dbReference>
<dbReference type="InterPro" id="IPR017911">
    <property type="entry name" value="MacB-like_ATP-bd"/>
</dbReference>
<dbReference type="InterPro" id="IPR027417">
    <property type="entry name" value="P-loop_NTPase"/>
</dbReference>
<dbReference type="PANTHER" id="PTHR42798:SF2">
    <property type="entry name" value="ABC TRANSPORTER ATP-BINDING PROTEIN MG467-RELATED"/>
    <property type="match status" value="1"/>
</dbReference>
<dbReference type="PANTHER" id="PTHR42798">
    <property type="entry name" value="LIPOPROTEIN-RELEASING SYSTEM ATP-BINDING PROTEIN LOLD"/>
    <property type="match status" value="1"/>
</dbReference>
<dbReference type="Pfam" id="PF00005">
    <property type="entry name" value="ABC_tran"/>
    <property type="match status" value="1"/>
</dbReference>
<dbReference type="SMART" id="SM00382">
    <property type="entry name" value="AAA"/>
    <property type="match status" value="1"/>
</dbReference>
<dbReference type="SUPFAM" id="SSF52540">
    <property type="entry name" value="P-loop containing nucleoside triphosphate hydrolases"/>
    <property type="match status" value="1"/>
</dbReference>
<dbReference type="PROSITE" id="PS00211">
    <property type="entry name" value="ABC_TRANSPORTER_1"/>
    <property type="match status" value="1"/>
</dbReference>
<dbReference type="PROSITE" id="PS50893">
    <property type="entry name" value="ABC_TRANSPORTER_2"/>
    <property type="match status" value="1"/>
</dbReference>
<keyword id="KW-0067">ATP-binding</keyword>
<keyword id="KW-0547">Nucleotide-binding</keyword>
<keyword id="KW-1185">Reference proteome</keyword>
<keyword id="KW-0813">Transport</keyword>
<evidence type="ECO:0000255" key="1">
    <source>
        <dbReference type="PROSITE-ProRule" id="PRU00434"/>
    </source>
</evidence>
<evidence type="ECO:0000305" key="2"/>
<comment type="similarity">
    <text evidence="2">Belongs to the ABC transporter superfamily.</text>
</comment>
<protein>
    <recommendedName>
        <fullName>Putative ABC transporter ATP-binding protein MG065</fullName>
    </recommendedName>
</protein>
<organism>
    <name type="scientific">Mycoplasma genitalium (strain ATCC 33530 / DSM 19775 / NCTC 10195 / G37)</name>
    <name type="common">Mycoplasmoides genitalium</name>
    <dbReference type="NCBI Taxonomy" id="243273"/>
    <lineage>
        <taxon>Bacteria</taxon>
        <taxon>Bacillati</taxon>
        <taxon>Mycoplasmatota</taxon>
        <taxon>Mycoplasmoidales</taxon>
        <taxon>Mycoplasmoidaceae</taxon>
        <taxon>Mycoplasmoides</taxon>
    </lineage>
</organism>
<gene>
    <name type="ordered locus">MG065</name>
</gene>
<sequence>MDFFSLNKIIKPNQKFTSNEAEFLQIATDYLEESQNYLQKGLKQLKKEYKRSIIYNPNLEYKRFVKWKENFTETFESYYDRFFITKYNHYSLSLLFSFINEQIETVIASYNSFLNEHNKLAFNKVSFSFEKKLFEATQQFNNLEKNTAISDDLPLQFKVRTTQLKAQRERELKNLLNKIKLKNLSEKKQEILLNNWFNSNERLFLKNEVKKVNWLNSPRQKQQAAQIDDQNIIELKNVYKYITNGITTNAVLKGVDLAIKSHDFIVILGPSGSGKTTLLNIISGMDRASSGSVIVNGYNMICLNDRKLTKFRQKYVGYIFQQYGLLPNLTVRENIEIGANLQPDPSKRISIDALLEAVGMDSLQKKLPNELSGGQQQRVSIARAFAKNPLLIFGDEPTGALDLEMTQIVLKQFLAIKKRYQTTMIIVTHNNLIANLADLVIYVADGKIKSLHRNLNPKQVEEIHWI</sequence>